<feature type="signal peptide" evidence="1">
    <location>
        <begin position="1"/>
        <end position="31"/>
    </location>
</feature>
<feature type="chain" id="PRO_1000065804" description="Cytochrome c-552">
    <location>
        <begin position="32"/>
        <end position="494"/>
    </location>
</feature>
<feature type="binding site" description="axial binding residue" evidence="1">
    <location>
        <position position="116"/>
    </location>
    <ligand>
        <name>heme c</name>
        <dbReference type="ChEBI" id="CHEBI:61717"/>
        <label>3</label>
    </ligand>
    <ligandPart>
        <name>Fe</name>
        <dbReference type="ChEBI" id="CHEBI:18248"/>
    </ligandPart>
</feature>
<feature type="binding site" description="covalent" evidence="1">
    <location>
        <position position="144"/>
    </location>
    <ligand>
        <name>heme</name>
        <dbReference type="ChEBI" id="CHEBI:30413"/>
        <label>1</label>
    </ligand>
</feature>
<feature type="binding site" description="covalent" evidence="1">
    <location>
        <position position="147"/>
    </location>
    <ligand>
        <name>heme</name>
        <dbReference type="ChEBI" id="CHEBI:30413"/>
        <label>1</label>
    </ligand>
</feature>
<feature type="binding site" description="axial binding residue" evidence="1">
    <location>
        <position position="148"/>
    </location>
    <ligand>
        <name>heme</name>
        <dbReference type="ChEBI" id="CHEBI:30413"/>
        <label>1</label>
    </ligand>
    <ligandPart>
        <name>Fe</name>
        <dbReference type="ChEBI" id="CHEBI:18248"/>
    </ligandPart>
</feature>
<feature type="binding site" description="covalent" evidence="1">
    <location>
        <position position="182"/>
    </location>
    <ligand>
        <name>heme c</name>
        <dbReference type="ChEBI" id="CHEBI:61717"/>
        <label>2</label>
    </ligand>
</feature>
<feature type="binding site" description="covalent" evidence="1">
    <location>
        <position position="185"/>
    </location>
    <ligand>
        <name>heme c</name>
        <dbReference type="ChEBI" id="CHEBI:61717"/>
        <label>2</label>
    </ligand>
</feature>
<feature type="binding site" description="axial binding residue" evidence="1">
    <location>
        <position position="186"/>
    </location>
    <ligand>
        <name>heme c</name>
        <dbReference type="ChEBI" id="CHEBI:61717"/>
        <label>2</label>
    </ligand>
    <ligandPart>
        <name>Fe</name>
        <dbReference type="ChEBI" id="CHEBI:18248"/>
    </ligandPart>
</feature>
<feature type="binding site" description="covalent" evidence="1">
    <location>
        <position position="224"/>
    </location>
    <ligand>
        <name>heme c</name>
        <dbReference type="ChEBI" id="CHEBI:61717"/>
        <label>3</label>
    </ligand>
</feature>
<feature type="binding site" description="covalent" evidence="1">
    <location>
        <position position="227"/>
    </location>
    <ligand>
        <name>heme c</name>
        <dbReference type="ChEBI" id="CHEBI:61717"/>
        <label>3</label>
    </ligand>
</feature>
<feature type="binding site" description="axial binding residue" evidence="1">
    <location>
        <position position="228"/>
    </location>
    <ligand>
        <name>heme c</name>
        <dbReference type="ChEBI" id="CHEBI:61717"/>
        <label>3</label>
    </ligand>
    <ligandPart>
        <name>Fe</name>
        <dbReference type="ChEBI" id="CHEBI:18248"/>
    </ligandPart>
</feature>
<feature type="binding site" evidence="1">
    <location>
        <position position="230"/>
    </location>
    <ligand>
        <name>Ca(2+)</name>
        <dbReference type="ChEBI" id="CHEBI:29108"/>
    </ligand>
</feature>
<feature type="binding site" evidence="1">
    <location>
        <position position="231"/>
    </location>
    <ligand>
        <name>Ca(2+)</name>
        <dbReference type="ChEBI" id="CHEBI:29108"/>
    </ligand>
</feature>
<feature type="binding site" evidence="1">
    <location>
        <position position="231"/>
    </location>
    <ligand>
        <name>substrate</name>
    </ligand>
</feature>
<feature type="binding site" evidence="1">
    <location>
        <position position="276"/>
    </location>
    <ligand>
        <name>Ca(2+)</name>
        <dbReference type="ChEBI" id="CHEBI:29108"/>
    </ligand>
</feature>
<feature type="binding site" evidence="1">
    <location>
        <position position="278"/>
    </location>
    <ligand>
        <name>Ca(2+)</name>
        <dbReference type="ChEBI" id="CHEBI:29108"/>
    </ligand>
</feature>
<feature type="binding site" evidence="1">
    <location>
        <position position="279"/>
    </location>
    <ligand>
        <name>substrate</name>
    </ligand>
</feature>
<feature type="binding site" description="axial binding residue" evidence="1">
    <location>
        <position position="290"/>
    </location>
    <ligand>
        <name>heme c</name>
        <dbReference type="ChEBI" id="CHEBI:61717"/>
        <label>5</label>
    </ligand>
    <ligandPart>
        <name>Fe</name>
        <dbReference type="ChEBI" id="CHEBI:18248"/>
    </ligandPart>
</feature>
<feature type="binding site" description="covalent" evidence="1">
    <location>
        <position position="297"/>
    </location>
    <ligand>
        <name>heme c</name>
        <dbReference type="ChEBI" id="CHEBI:61717"/>
        <label>4</label>
    </ligand>
</feature>
<feature type="binding site" description="covalent" evidence="1">
    <location>
        <position position="300"/>
    </location>
    <ligand>
        <name>heme c</name>
        <dbReference type="ChEBI" id="CHEBI:61717"/>
        <label>4</label>
    </ligand>
</feature>
<feature type="binding site" description="axial binding residue" evidence="1">
    <location>
        <position position="301"/>
    </location>
    <ligand>
        <name>heme c</name>
        <dbReference type="ChEBI" id="CHEBI:61717"/>
        <label>4</label>
    </ligand>
    <ligandPart>
        <name>Fe</name>
        <dbReference type="ChEBI" id="CHEBI:18248"/>
    </ligandPart>
</feature>
<feature type="binding site" description="axial binding residue" evidence="1">
    <location>
        <position position="315"/>
    </location>
    <ligand>
        <name>heme c</name>
        <dbReference type="ChEBI" id="CHEBI:61717"/>
        <label>2</label>
    </ligand>
    <ligandPart>
        <name>Fe</name>
        <dbReference type="ChEBI" id="CHEBI:18248"/>
    </ligandPart>
</feature>
<feature type="binding site" description="covalent" evidence="1">
    <location>
        <position position="328"/>
    </location>
    <ligand>
        <name>heme c</name>
        <dbReference type="ChEBI" id="CHEBI:61717"/>
        <label>5</label>
    </ligand>
</feature>
<feature type="binding site" description="covalent" evidence="1">
    <location>
        <position position="331"/>
    </location>
    <ligand>
        <name>heme c</name>
        <dbReference type="ChEBI" id="CHEBI:61717"/>
        <label>5</label>
    </ligand>
</feature>
<feature type="binding site" description="axial binding residue" evidence="1">
    <location>
        <position position="332"/>
    </location>
    <ligand>
        <name>heme c</name>
        <dbReference type="ChEBI" id="CHEBI:61717"/>
        <label>5</label>
    </ligand>
    <ligandPart>
        <name>Fe</name>
        <dbReference type="ChEBI" id="CHEBI:18248"/>
    </ligandPart>
</feature>
<feature type="binding site" description="axial binding residue" evidence="1">
    <location>
        <position position="407"/>
    </location>
    <ligand>
        <name>heme c</name>
        <dbReference type="ChEBI" id="CHEBI:61717"/>
        <label>4</label>
    </ligand>
    <ligandPart>
        <name>Fe</name>
        <dbReference type="ChEBI" id="CHEBI:18248"/>
    </ligandPart>
</feature>
<sequence length="494" mass="56145">MEKKLKSWQGWLLFGGTMVVVFVLGMIAASVNERHAEVTSVMNNKKTEITGIEARNDKFESNYPREYQTWEATADTSFKSLYNGNQAVDVLEARPEMVILWAGYAFSKDYSTPRGHMHAIEDMRNTLRVGAPMTENEGPQPATCWTCKSPDVPRMMQAMGVDNFYKGKWASLGKEIVNPIGCADCHEPENMNLHISRPALIEAFQRQGKDITKATQQEMRSLVCAQCHVEYYFKGDGKYLTFPWDKGSTVEDMEAYYDEAGFADYTHKLSRAPILKAQHPDYEISQMGIHAQRGVSCADCHMPYKSEGGVKYSDHHIQSPLAMIDRTCQVCHRESEETLRNNVYERQNKANEMRNRLETELAKAHVEAKFAWDKGATEDQMKDVLKLIRQAQWRWDFGVASHGGAFHAPQEIQRILGNGLDKAMQARLATAKVLAKLGYTDDVPMPDFSTKEKAQQYIGLDMAAERTAKEKFLNTIVPQWMKEAQENNRLAKNI</sequence>
<name>NRFA_PARD8</name>
<organism>
    <name type="scientific">Parabacteroides distasonis (strain ATCC 8503 / DSM 20701 / CIP 104284 / JCM 5825 / NCTC 11152)</name>
    <dbReference type="NCBI Taxonomy" id="435591"/>
    <lineage>
        <taxon>Bacteria</taxon>
        <taxon>Pseudomonadati</taxon>
        <taxon>Bacteroidota</taxon>
        <taxon>Bacteroidia</taxon>
        <taxon>Bacteroidales</taxon>
        <taxon>Tannerellaceae</taxon>
        <taxon>Parabacteroides</taxon>
    </lineage>
</organism>
<keyword id="KW-0106">Calcium</keyword>
<keyword id="KW-0249">Electron transport</keyword>
<keyword id="KW-0349">Heme</keyword>
<keyword id="KW-0408">Iron</keyword>
<keyword id="KW-0479">Metal-binding</keyword>
<keyword id="KW-0560">Oxidoreductase</keyword>
<keyword id="KW-0574">Periplasm</keyword>
<keyword id="KW-1185">Reference proteome</keyword>
<keyword id="KW-0677">Repeat</keyword>
<keyword id="KW-0732">Signal</keyword>
<keyword id="KW-0813">Transport</keyword>
<accession>A6L890</accession>
<proteinExistence type="inferred from homology"/>
<gene>
    <name evidence="1" type="primary">nrfA</name>
    <name type="ordered locus">BDI_0109</name>
</gene>
<reference key="1">
    <citation type="journal article" date="2007" name="PLoS Biol.">
        <title>Evolution of symbiotic bacteria in the distal human intestine.</title>
        <authorList>
            <person name="Xu J."/>
            <person name="Mahowald M.A."/>
            <person name="Ley R.E."/>
            <person name="Lozupone C.A."/>
            <person name="Hamady M."/>
            <person name="Martens E.C."/>
            <person name="Henrissat B."/>
            <person name="Coutinho P.M."/>
            <person name="Minx P."/>
            <person name="Latreille P."/>
            <person name="Cordum H."/>
            <person name="Van Brunt A."/>
            <person name="Kim K."/>
            <person name="Fulton R.S."/>
            <person name="Fulton L.A."/>
            <person name="Clifton S.W."/>
            <person name="Wilson R.K."/>
            <person name="Knight R.D."/>
            <person name="Gordon J.I."/>
        </authorList>
    </citation>
    <scope>NUCLEOTIDE SEQUENCE [LARGE SCALE GENOMIC DNA]</scope>
    <source>
        <strain>ATCC 8503 / DSM 20701 / CIP 104284 / JCM 5825 / NCTC 11152</strain>
    </source>
</reference>
<dbReference type="EC" id="1.7.2.2" evidence="1"/>
<dbReference type="EMBL" id="CP000140">
    <property type="protein sequence ID" value="ABR41904.1"/>
    <property type="molecule type" value="Genomic_DNA"/>
</dbReference>
<dbReference type="RefSeq" id="WP_011965891.1">
    <property type="nucleotide sequence ID" value="NC_009615.1"/>
</dbReference>
<dbReference type="SMR" id="A6L890"/>
<dbReference type="STRING" id="435591.BDI_0109"/>
<dbReference type="PaxDb" id="435591-BDI_0109"/>
<dbReference type="KEGG" id="pdi:BDI_0109"/>
<dbReference type="PATRIC" id="fig|435591.13.peg.105"/>
<dbReference type="eggNOG" id="COG3303">
    <property type="taxonomic scope" value="Bacteria"/>
</dbReference>
<dbReference type="HOGENOM" id="CLU_035040_1_0_10"/>
<dbReference type="BioCyc" id="PDIS435591:G1G5A-109-MONOMER"/>
<dbReference type="UniPathway" id="UPA00653"/>
<dbReference type="Proteomes" id="UP000000566">
    <property type="component" value="Chromosome"/>
</dbReference>
<dbReference type="GO" id="GO:0030288">
    <property type="term" value="C:outer membrane-bounded periplasmic space"/>
    <property type="evidence" value="ECO:0007669"/>
    <property type="project" value="TreeGrafter"/>
</dbReference>
<dbReference type="GO" id="GO:0005509">
    <property type="term" value="F:calcium ion binding"/>
    <property type="evidence" value="ECO:0007669"/>
    <property type="project" value="UniProtKB-UniRule"/>
</dbReference>
<dbReference type="GO" id="GO:0020037">
    <property type="term" value="F:heme binding"/>
    <property type="evidence" value="ECO:0007669"/>
    <property type="project" value="InterPro"/>
</dbReference>
<dbReference type="GO" id="GO:0005506">
    <property type="term" value="F:iron ion binding"/>
    <property type="evidence" value="ECO:0007669"/>
    <property type="project" value="UniProtKB-UniRule"/>
</dbReference>
<dbReference type="GO" id="GO:0042279">
    <property type="term" value="F:nitrite reductase (cytochrome, ammonia-forming) activity"/>
    <property type="evidence" value="ECO:0007669"/>
    <property type="project" value="UniProtKB-UniRule"/>
</dbReference>
<dbReference type="GO" id="GO:0019645">
    <property type="term" value="P:anaerobic electron transport chain"/>
    <property type="evidence" value="ECO:0007669"/>
    <property type="project" value="TreeGrafter"/>
</dbReference>
<dbReference type="GO" id="GO:0042128">
    <property type="term" value="P:nitrate assimilation"/>
    <property type="evidence" value="ECO:0007669"/>
    <property type="project" value="UniProtKB-UniRule"/>
</dbReference>
<dbReference type="CDD" id="cd00548">
    <property type="entry name" value="NrfA-like"/>
    <property type="match status" value="1"/>
</dbReference>
<dbReference type="FunFam" id="1.20.140.10:FF:000014">
    <property type="entry name" value="Cytochrome c-552"/>
    <property type="match status" value="1"/>
</dbReference>
<dbReference type="Gene3D" id="1.20.140.10">
    <property type="entry name" value="Butyryl-CoA Dehydrogenase, subunit A, domain 3"/>
    <property type="match status" value="1"/>
</dbReference>
<dbReference type="Gene3D" id="1.10.1130.10">
    <property type="entry name" value="Flavocytochrome C3, Chain A"/>
    <property type="match status" value="1"/>
</dbReference>
<dbReference type="HAMAP" id="MF_01182">
    <property type="entry name" value="Cytochrom_C552"/>
    <property type="match status" value="1"/>
</dbReference>
<dbReference type="InterPro" id="IPR003321">
    <property type="entry name" value="Cyt_c552"/>
</dbReference>
<dbReference type="InterPro" id="IPR017570">
    <property type="entry name" value="Cyt_c_NO2Rdtase_formate-dep"/>
</dbReference>
<dbReference type="InterPro" id="IPR036280">
    <property type="entry name" value="Multihaem_cyt_sf"/>
</dbReference>
<dbReference type="NCBIfam" id="NF008339">
    <property type="entry name" value="PRK11125.1"/>
    <property type="match status" value="1"/>
</dbReference>
<dbReference type="PANTHER" id="PTHR30633:SF0">
    <property type="entry name" value="CYTOCHROME C-552"/>
    <property type="match status" value="1"/>
</dbReference>
<dbReference type="PANTHER" id="PTHR30633">
    <property type="entry name" value="CYTOCHROME C-552 RESPIRATORY NITRITE REDUCTASE"/>
    <property type="match status" value="1"/>
</dbReference>
<dbReference type="Pfam" id="PF02335">
    <property type="entry name" value="Cytochrom_C552"/>
    <property type="match status" value="1"/>
</dbReference>
<dbReference type="PIRSF" id="PIRSF000243">
    <property type="entry name" value="Cyt_c552"/>
    <property type="match status" value="1"/>
</dbReference>
<dbReference type="SUPFAM" id="SSF48695">
    <property type="entry name" value="Multiheme cytochromes"/>
    <property type="match status" value="1"/>
</dbReference>
<dbReference type="PROSITE" id="PS51008">
    <property type="entry name" value="MULTIHEME_CYTC"/>
    <property type="match status" value="1"/>
</dbReference>
<comment type="function">
    <text evidence="1">Catalyzes the reduction of nitrite to ammonia, consuming six electrons in the process.</text>
</comment>
<comment type="catalytic activity">
    <reaction evidence="1">
        <text>6 Fe(III)-[cytochrome c] + NH4(+) + 2 H2O = 6 Fe(II)-[cytochrome c] + nitrite + 8 H(+)</text>
        <dbReference type="Rhea" id="RHEA:13089"/>
        <dbReference type="Rhea" id="RHEA-COMP:10350"/>
        <dbReference type="Rhea" id="RHEA-COMP:14399"/>
        <dbReference type="ChEBI" id="CHEBI:15377"/>
        <dbReference type="ChEBI" id="CHEBI:15378"/>
        <dbReference type="ChEBI" id="CHEBI:16301"/>
        <dbReference type="ChEBI" id="CHEBI:28938"/>
        <dbReference type="ChEBI" id="CHEBI:29033"/>
        <dbReference type="ChEBI" id="CHEBI:29034"/>
        <dbReference type="EC" id="1.7.2.2"/>
    </reaction>
</comment>
<comment type="cofactor">
    <cofactor evidence="1">
        <name>Ca(2+)</name>
        <dbReference type="ChEBI" id="CHEBI:29108"/>
    </cofactor>
    <text evidence="1">Binds 1 Ca(2+) ion per monomer.</text>
</comment>
<comment type="cofactor">
    <cofactor evidence="1">
        <name>heme c</name>
        <dbReference type="ChEBI" id="CHEBI:61717"/>
    </cofactor>
    <text evidence="1">Binds 5 heme c groups covalently per monomer.</text>
</comment>
<comment type="pathway">
    <text evidence="1">Nitrogen metabolism; nitrate reduction (assimilation).</text>
</comment>
<comment type="subcellular location">
    <subcellularLocation>
        <location evidence="1">Periplasm</location>
    </subcellularLocation>
</comment>
<comment type="similarity">
    <text evidence="1">Belongs to the cytochrome c-552 family.</text>
</comment>
<evidence type="ECO:0000255" key="1">
    <source>
        <dbReference type="HAMAP-Rule" id="MF_01182"/>
    </source>
</evidence>
<protein>
    <recommendedName>
        <fullName evidence="1">Cytochrome c-552</fullName>
        <ecNumber evidence="1">1.7.2.2</ecNumber>
    </recommendedName>
    <alternativeName>
        <fullName evidence="1">Ammonia-forming cytochrome c nitrite reductase</fullName>
        <shortName evidence="1">Cytochrome c nitrite reductase</shortName>
    </alternativeName>
</protein>